<keyword id="KW-0025">Alternative splicing</keyword>
<keyword id="KW-0175">Coiled coil</keyword>
<keyword id="KW-1185">Reference proteome</keyword>
<organism evidence="12">
    <name type="scientific">Mus musculus</name>
    <name type="common">Mouse</name>
    <dbReference type="NCBI Taxonomy" id="10090"/>
    <lineage>
        <taxon>Eukaryota</taxon>
        <taxon>Metazoa</taxon>
        <taxon>Chordata</taxon>
        <taxon>Craniata</taxon>
        <taxon>Vertebrata</taxon>
        <taxon>Euteleostomi</taxon>
        <taxon>Mammalia</taxon>
        <taxon>Eutheria</taxon>
        <taxon>Euarchontoglires</taxon>
        <taxon>Glires</taxon>
        <taxon>Rodentia</taxon>
        <taxon>Myomorpha</taxon>
        <taxon>Muroidea</taxon>
        <taxon>Muridae</taxon>
        <taxon>Murinae</taxon>
        <taxon>Mus</taxon>
        <taxon>Mus</taxon>
    </lineage>
</organism>
<reference evidence="9" key="1">
    <citation type="journal article" date="2007" name="FEBS J.">
        <title>Specific TSC22 domain transcripts are hypertonically induced and alternatively spliced to protect mouse kidney cells during osmotic stress.</title>
        <authorList>
            <person name="Fiol D.F."/>
            <person name="Mak S.K."/>
            <person name="Kueltz D."/>
        </authorList>
    </citation>
    <scope>NUCLEOTIDE SEQUENCE [MRNA] (ISOFORM TSC22D2-4)</scope>
    <scope>FUNCTION (ISOFORM TSC22D2-4)</scope>
    <scope>TISSUE SPECIFICITY</scope>
    <scope>INDUCTION BY HYPERTONIC STRESS (ISOFORMS TSC22D2-1; TSC22D2-3 AND TSC22D2-4)</scope>
    <source>
        <strain evidence="9">C57B16/J</strain>
    </source>
</reference>
<reference evidence="12" key="2">
    <citation type="journal article" date="2009" name="PLoS Biol.">
        <title>Lineage-specific biology revealed by a finished genome assembly of the mouse.</title>
        <authorList>
            <person name="Church D.M."/>
            <person name="Goodstadt L."/>
            <person name="Hillier L.W."/>
            <person name="Zody M.C."/>
            <person name="Goldstein S."/>
            <person name="She X."/>
            <person name="Bult C.J."/>
            <person name="Agarwala R."/>
            <person name="Cherry J.L."/>
            <person name="DiCuccio M."/>
            <person name="Hlavina W."/>
            <person name="Kapustin Y."/>
            <person name="Meric P."/>
            <person name="Maglott D."/>
            <person name="Birtle Z."/>
            <person name="Marques A.C."/>
            <person name="Graves T."/>
            <person name="Zhou S."/>
            <person name="Teague B."/>
            <person name="Potamousis K."/>
            <person name="Churas C."/>
            <person name="Place M."/>
            <person name="Herschleb J."/>
            <person name="Runnheim R."/>
            <person name="Forrest D."/>
            <person name="Amos-Landgraf J."/>
            <person name="Schwartz D.C."/>
            <person name="Cheng Z."/>
            <person name="Lindblad-Toh K."/>
            <person name="Eichler E.E."/>
            <person name="Ponting C.P."/>
        </authorList>
    </citation>
    <scope>NUCLEOTIDE SEQUENCE [LARGE SCALE GENOMIC DNA]</scope>
    <source>
        <strain evidence="12">C57BL/6J</strain>
    </source>
</reference>
<reference evidence="10" key="3">
    <citation type="journal article" date="2005" name="Science">
        <title>The transcriptional landscape of the mammalian genome.</title>
        <authorList>
            <person name="Carninci P."/>
            <person name="Kasukawa T."/>
            <person name="Katayama S."/>
            <person name="Gough J."/>
            <person name="Frith M.C."/>
            <person name="Maeda N."/>
            <person name="Oyama R."/>
            <person name="Ravasi T."/>
            <person name="Lenhard B."/>
            <person name="Wells C."/>
            <person name="Kodzius R."/>
            <person name="Shimokawa K."/>
            <person name="Bajic V.B."/>
            <person name="Brenner S.E."/>
            <person name="Batalov S."/>
            <person name="Forrest A.R."/>
            <person name="Zavolan M."/>
            <person name="Davis M.J."/>
            <person name="Wilming L.G."/>
            <person name="Aidinis V."/>
            <person name="Allen J.E."/>
            <person name="Ambesi-Impiombato A."/>
            <person name="Apweiler R."/>
            <person name="Aturaliya R.N."/>
            <person name="Bailey T.L."/>
            <person name="Bansal M."/>
            <person name="Baxter L."/>
            <person name="Beisel K.W."/>
            <person name="Bersano T."/>
            <person name="Bono H."/>
            <person name="Chalk A.M."/>
            <person name="Chiu K.P."/>
            <person name="Choudhary V."/>
            <person name="Christoffels A."/>
            <person name="Clutterbuck D.R."/>
            <person name="Crowe M.L."/>
            <person name="Dalla E."/>
            <person name="Dalrymple B.P."/>
            <person name="de Bono B."/>
            <person name="Della Gatta G."/>
            <person name="di Bernardo D."/>
            <person name="Down T."/>
            <person name="Engstrom P."/>
            <person name="Fagiolini M."/>
            <person name="Faulkner G."/>
            <person name="Fletcher C.F."/>
            <person name="Fukushima T."/>
            <person name="Furuno M."/>
            <person name="Futaki S."/>
            <person name="Gariboldi M."/>
            <person name="Georgii-Hemming P."/>
            <person name="Gingeras T.R."/>
            <person name="Gojobori T."/>
            <person name="Green R.E."/>
            <person name="Gustincich S."/>
            <person name="Harbers M."/>
            <person name="Hayashi Y."/>
            <person name="Hensch T.K."/>
            <person name="Hirokawa N."/>
            <person name="Hill D."/>
            <person name="Huminiecki L."/>
            <person name="Iacono M."/>
            <person name="Ikeo K."/>
            <person name="Iwama A."/>
            <person name="Ishikawa T."/>
            <person name="Jakt M."/>
            <person name="Kanapin A."/>
            <person name="Katoh M."/>
            <person name="Kawasawa Y."/>
            <person name="Kelso J."/>
            <person name="Kitamura H."/>
            <person name="Kitano H."/>
            <person name="Kollias G."/>
            <person name="Krishnan S.P."/>
            <person name="Kruger A."/>
            <person name="Kummerfeld S.K."/>
            <person name="Kurochkin I.V."/>
            <person name="Lareau L.F."/>
            <person name="Lazarevic D."/>
            <person name="Lipovich L."/>
            <person name="Liu J."/>
            <person name="Liuni S."/>
            <person name="McWilliam S."/>
            <person name="Madan Babu M."/>
            <person name="Madera M."/>
            <person name="Marchionni L."/>
            <person name="Matsuda H."/>
            <person name="Matsuzawa S."/>
            <person name="Miki H."/>
            <person name="Mignone F."/>
            <person name="Miyake S."/>
            <person name="Morris K."/>
            <person name="Mottagui-Tabar S."/>
            <person name="Mulder N."/>
            <person name="Nakano N."/>
            <person name="Nakauchi H."/>
            <person name="Ng P."/>
            <person name="Nilsson R."/>
            <person name="Nishiguchi S."/>
            <person name="Nishikawa S."/>
            <person name="Nori F."/>
            <person name="Ohara O."/>
            <person name="Okazaki Y."/>
            <person name="Orlando V."/>
            <person name="Pang K.C."/>
            <person name="Pavan W.J."/>
            <person name="Pavesi G."/>
            <person name="Pesole G."/>
            <person name="Petrovsky N."/>
            <person name="Piazza S."/>
            <person name="Reed J."/>
            <person name="Reid J.F."/>
            <person name="Ring B.Z."/>
            <person name="Ringwald M."/>
            <person name="Rost B."/>
            <person name="Ruan Y."/>
            <person name="Salzberg S.L."/>
            <person name="Sandelin A."/>
            <person name="Schneider C."/>
            <person name="Schoenbach C."/>
            <person name="Sekiguchi K."/>
            <person name="Semple C.A."/>
            <person name="Seno S."/>
            <person name="Sessa L."/>
            <person name="Sheng Y."/>
            <person name="Shibata Y."/>
            <person name="Shimada H."/>
            <person name="Shimada K."/>
            <person name="Silva D."/>
            <person name="Sinclair B."/>
            <person name="Sperling S."/>
            <person name="Stupka E."/>
            <person name="Sugiura K."/>
            <person name="Sultana R."/>
            <person name="Takenaka Y."/>
            <person name="Taki K."/>
            <person name="Tammoja K."/>
            <person name="Tan S.L."/>
            <person name="Tang S."/>
            <person name="Taylor M.S."/>
            <person name="Tegner J."/>
            <person name="Teichmann S.A."/>
            <person name="Ueda H.R."/>
            <person name="van Nimwegen E."/>
            <person name="Verardo R."/>
            <person name="Wei C.L."/>
            <person name="Yagi K."/>
            <person name="Yamanishi H."/>
            <person name="Zabarovsky E."/>
            <person name="Zhu S."/>
            <person name="Zimmer A."/>
            <person name="Hide W."/>
            <person name="Bult C."/>
            <person name="Grimmond S.M."/>
            <person name="Teasdale R.D."/>
            <person name="Liu E.T."/>
            <person name="Brusic V."/>
            <person name="Quackenbush J."/>
            <person name="Wahlestedt C."/>
            <person name="Mattick J.S."/>
            <person name="Hume D.A."/>
            <person name="Kai C."/>
            <person name="Sasaki D."/>
            <person name="Tomaru Y."/>
            <person name="Fukuda S."/>
            <person name="Kanamori-Katayama M."/>
            <person name="Suzuki M."/>
            <person name="Aoki J."/>
            <person name="Arakawa T."/>
            <person name="Iida J."/>
            <person name="Imamura K."/>
            <person name="Itoh M."/>
            <person name="Kato T."/>
            <person name="Kawaji H."/>
            <person name="Kawagashira N."/>
            <person name="Kawashima T."/>
            <person name="Kojima M."/>
            <person name="Kondo S."/>
            <person name="Konno H."/>
            <person name="Nakano K."/>
            <person name="Ninomiya N."/>
            <person name="Nishio T."/>
            <person name="Okada M."/>
            <person name="Plessy C."/>
            <person name="Shibata K."/>
            <person name="Shiraki T."/>
            <person name="Suzuki S."/>
            <person name="Tagami M."/>
            <person name="Waki K."/>
            <person name="Watahiki A."/>
            <person name="Okamura-Oho Y."/>
            <person name="Suzuki H."/>
            <person name="Kawai J."/>
            <person name="Hayashizaki Y."/>
        </authorList>
    </citation>
    <scope>NUCLEOTIDE SEQUENCE [LARGE SCALE MRNA] OF 64-642</scope>
    <source>
        <strain evidence="10">C57BL/6J</strain>
        <tissue evidence="10">Skin</tissue>
    </source>
</reference>
<reference evidence="8" key="4">
    <citation type="journal article" date="2004" name="Genome Res.">
        <title>The status, quality, and expansion of the NIH full-length cDNA project: the Mammalian Gene Collection (MGC).</title>
        <authorList>
            <consortium name="The MGC Project Team"/>
        </authorList>
    </citation>
    <scope>NUCLEOTIDE SEQUENCE [LARGE SCALE MRNA] OF 579-745 (ISOFORM TSC22D2-1)</scope>
    <source>
        <tissue evidence="8">Olfactory epithelium</tissue>
    </source>
</reference>
<reference evidence="13" key="5">
    <citation type="journal article" date="2010" name="Cell">
        <title>A tissue-specific atlas of mouse protein phosphorylation and expression.</title>
        <authorList>
            <person name="Huttlin E.L."/>
            <person name="Jedrychowski M.P."/>
            <person name="Elias J.E."/>
            <person name="Goswami T."/>
            <person name="Rad R."/>
            <person name="Beausoleil S.A."/>
            <person name="Villen J."/>
            <person name="Haas W."/>
            <person name="Sowa M.E."/>
            <person name="Gygi S.P."/>
        </authorList>
    </citation>
    <scope>IDENTIFICATION BY MASS SPECTROMETRY [LARGE SCALE ANALYSIS]</scope>
</reference>
<comment type="function">
    <text evidence="1">Reduces the level of nuclear PKM isoform M2 which results in repression of cyclin CCND1 transcription and reduced cell growth.</text>
</comment>
<comment type="function">
    <molecule>Isoform TSC22D2-4</molecule>
    <text evidence="4">May protect kidney cells from hyperosmotic stress.</text>
</comment>
<comment type="subunit">
    <text evidence="1">Interacts with NRBP1 (By similarity). Interacts with PKM isoform M2; the interaction results in reduced nuclear levels of PKM isoform M2, leading to repression of cyclin CCND1 transcription and reduced cell growth (By similarity). Interacts with WDR77 (By similarity).</text>
</comment>
<comment type="alternative products">
    <event type="alternative splicing"/>
    <isoform>
        <id>E9Q7M2-1</id>
        <name evidence="5">TSC22D2-3</name>
        <sequence type="displayed"/>
    </isoform>
    <isoform>
        <id>E9Q7M2-2</id>
        <name evidence="5">TSC22D2-1</name>
        <sequence type="described" ref="VSP_061913"/>
    </isoform>
    <isoform>
        <id>E9Q7M2-3</id>
        <name evidence="5">TSC22D2-4</name>
        <sequence type="described" ref="VSP_061912"/>
    </isoform>
    <text evidence="7">An additional isoform is suggested but there is no evidence of a translated protein that has an extended N-terminus and a truncated C-terminus.</text>
</comment>
<comment type="tissue specificity">
    <text evidence="4">Expressed in the cortex, medulla and papilla of the kidney.</text>
</comment>
<comment type="tissue specificity">
    <molecule>Isoform TSC22D2-3</molecule>
    <text evidence="4">Expressed in the kidney.</text>
</comment>
<comment type="tissue specificity">
    <molecule>Isoform TSC22D2-4</molecule>
    <text evidence="4">Expressed in the kidney.</text>
</comment>
<comment type="induction">
    <molecule>Isoform TSC22D2-1</molecule>
    <text evidence="4">Induced by renal hypertonic stress, via mRNA stabilization.</text>
</comment>
<comment type="induction">
    <molecule>Isoform TSC22D2-3</molecule>
    <text evidence="4">Induced by renal hypertonic stress, via mRNA stabilization.</text>
</comment>
<comment type="induction">
    <molecule>Isoform TSC22D2-4</molecule>
    <text evidence="4">Induced by renal hypertonic stress, via mRNA stabilization.</text>
</comment>
<comment type="similarity">
    <text evidence="6">Belongs to the TSC-22/Dip/Bun family.</text>
</comment>
<comment type="sequence caution" evidence="6">
    <conflict type="miscellaneous discrepancy">
        <sequence resource="EMBL-CDS" id="BAE21164"/>
    </conflict>
    <text>Probable cloning artifact.</text>
</comment>
<gene>
    <name evidence="11" type="primary">Tsc22d2</name>
</gene>
<protein>
    <recommendedName>
        <fullName evidence="11">TSC22 domain family protein 2</fullName>
    </recommendedName>
</protein>
<accession>E9Q7M2</accession>
<accession>A0A0G2JFZ4</accession>
<accession>A7LCN1</accession>
<accession>Q3V1I7</accession>
<accession>Q6PE86</accession>
<name>T22D2_MOUSE</name>
<proteinExistence type="evidence at protein level"/>
<feature type="chain" id="PRO_0000458071" description="TSC22 domain family protein 2">
    <location>
        <begin position="1"/>
        <end position="769"/>
    </location>
</feature>
<feature type="region of interest" description="Disordered" evidence="3">
    <location>
        <begin position="20"/>
        <end position="86"/>
    </location>
</feature>
<feature type="region of interest" description="Disordered" evidence="3">
    <location>
        <begin position="224"/>
        <end position="292"/>
    </location>
</feature>
<feature type="region of interest" description="Disordered" evidence="3">
    <location>
        <begin position="334"/>
        <end position="353"/>
    </location>
</feature>
<feature type="region of interest" description="Disordered" evidence="3">
    <location>
        <begin position="520"/>
        <end position="563"/>
    </location>
</feature>
<feature type="region of interest" description="Disordered" evidence="3">
    <location>
        <begin position="726"/>
        <end position="769"/>
    </location>
</feature>
<feature type="coiled-coil region" evidence="2">
    <location>
        <begin position="691"/>
        <end position="725"/>
    </location>
</feature>
<feature type="compositionally biased region" description="Acidic residues" evidence="3">
    <location>
        <begin position="28"/>
        <end position="37"/>
    </location>
</feature>
<feature type="compositionally biased region" description="Polar residues" evidence="3">
    <location>
        <begin position="229"/>
        <end position="252"/>
    </location>
</feature>
<feature type="compositionally biased region" description="Low complexity" evidence="3">
    <location>
        <begin position="269"/>
        <end position="279"/>
    </location>
</feature>
<feature type="compositionally biased region" description="Low complexity" evidence="3">
    <location>
        <begin position="531"/>
        <end position="541"/>
    </location>
</feature>
<feature type="compositionally biased region" description="Polar residues" evidence="3">
    <location>
        <begin position="542"/>
        <end position="563"/>
    </location>
</feature>
<feature type="compositionally biased region" description="Polar residues" evidence="3">
    <location>
        <begin position="726"/>
        <end position="745"/>
    </location>
</feature>
<feature type="compositionally biased region" description="Pro residues" evidence="3">
    <location>
        <begin position="754"/>
        <end position="763"/>
    </location>
</feature>
<feature type="splice variant" id="VSP_061912" description="In isoform TSC22D2-4.">
    <original>MSKMPAKKKSCFQITSVTTAQVATSITEDTESLDDPDESRTEDVSSEIFDVSRATDYGPEEVCERSSSEETLNNVGDAETPGTVSPNLILDGQLAAASAAPANGGGGGVSARSVAGALAQTLAAAAASVSTPGPSSATPSQPPATCSSRFRVIKLDHGSGEPYRRGRWTCMEYYERDSDSSVLTRSGDCIRHSNTLEQTAERDSGLGATGGSVVVVVASMQGAHGLDSGTDSSLTAVSQLPPSEKMSQPTLAQPQSFSVGQPQPPPPVGGAVAPSSASLPPFPGAATGPQPMTAAVQPTQLQGAVAGGALPGPVGQGLPPPPNVNLAQPVALAAQPGPAGGSSLSQQFAYPQPQIPPGHLLPMQPSGQSEYLPPHVALQPPSPAQPLSTSASATSASAASFPLGSGQSVSSLGAQMMGASAQPSEAVAPGPVPVGQAAPCQPAGVAPAALGGVVQPGSGLTGVGQPQPVQPPQQMGGSGQLPAVPGGPHTVVPGVPNVPAAVPVPSVPSVPTTSVTMPNVPAPLGQSQQLSSHTPVSRSSSVIQQVGSPLAQGTHSAPTSLPQSDLSQFQTQTQPLVGQVDDTRRKSEPLPQAPLSLIAESKPVVKPPVADALTNPLQLTPMNSLATSVFSIAIPVDGDEDRNPSTAFYQAFHLNTCQESKSLWDS</original>
    <variation>MLSTRVSHQVINC</variation>
    <location>
        <begin position="1"/>
        <end position="666"/>
    </location>
</feature>
<feature type="splice variant" id="VSP_061913" description="In isoform TSC22D2-1.">
    <location>
        <begin position="641"/>
        <end position="664"/>
    </location>
</feature>
<feature type="sequence conflict" description="In Ref. 3; BAE21164." evidence="6" ref="3">
    <original>Q</original>
    <variation>R</variation>
    <location>
        <position position="297"/>
    </location>
</feature>
<dbReference type="EMBL" id="EU004151">
    <property type="protein sequence ID" value="ABS52638.1"/>
    <property type="molecule type" value="mRNA"/>
</dbReference>
<dbReference type="EMBL" id="AK132430">
    <property type="protein sequence ID" value="BAE21164.1"/>
    <property type="status" value="ALT_SEQ"/>
    <property type="molecule type" value="mRNA"/>
</dbReference>
<dbReference type="EMBL" id="BC058221">
    <property type="protein sequence ID" value="AAH58221.1"/>
    <property type="molecule type" value="mRNA"/>
</dbReference>
<dbReference type="CCDS" id="CCDS38435.1">
    <molecule id="E9Q7M2-1"/>
</dbReference>
<dbReference type="CCDS" id="CCDS84624.1">
    <molecule id="E9Q7M2-2"/>
</dbReference>
<dbReference type="RefSeq" id="NP_001074698.1">
    <molecule id="E9Q7M2-1"/>
    <property type="nucleotide sequence ID" value="NM_001081229.2"/>
</dbReference>
<dbReference type="RefSeq" id="NP_001334162.1">
    <molecule id="E9Q7M2-2"/>
    <property type="nucleotide sequence ID" value="NM_001347233.1"/>
</dbReference>
<dbReference type="SMR" id="E9Q7M2"/>
<dbReference type="FunCoup" id="E9Q7M2">
    <property type="interactions" value="2421"/>
</dbReference>
<dbReference type="STRING" id="10090.ENSMUSP00000096688"/>
<dbReference type="GlyGen" id="E9Q7M2">
    <property type="glycosylation" value="4 sites, 1 O-linked glycan (1 site)"/>
</dbReference>
<dbReference type="iPTMnet" id="E9Q7M2"/>
<dbReference type="PhosphoSitePlus" id="E9Q7M2"/>
<dbReference type="jPOST" id="E9Q7M2"/>
<dbReference type="PaxDb" id="10090-ENSMUSP00000096688"/>
<dbReference type="PeptideAtlas" id="E9Q7M2"/>
<dbReference type="ProteomicsDB" id="331213"/>
<dbReference type="ProteomicsDB" id="357824"/>
<dbReference type="Antibodypedia" id="1698">
    <property type="antibodies" value="154 antibodies from 23 providers"/>
</dbReference>
<dbReference type="Ensembl" id="ENSMUST00000099090.7">
    <molecule id="E9Q7M2-1"/>
    <property type="protein sequence ID" value="ENSMUSP00000096688.3"/>
    <property type="gene ID" value="ENSMUSG00000027806.10"/>
</dbReference>
<dbReference type="Ensembl" id="ENSMUST00000199164.2">
    <molecule id="E9Q7M2-2"/>
    <property type="protein sequence ID" value="ENSMUSP00000143364.2"/>
    <property type="gene ID" value="ENSMUSG00000027806.10"/>
</dbReference>
<dbReference type="GeneID" id="72033"/>
<dbReference type="KEGG" id="mmu:72033"/>
<dbReference type="UCSC" id="uc008php.1">
    <molecule id="E9Q7M2-1"/>
    <property type="organism name" value="mouse"/>
</dbReference>
<dbReference type="AGR" id="MGI:1919283"/>
<dbReference type="CTD" id="9819"/>
<dbReference type="MGI" id="MGI:1919283">
    <property type="gene designation" value="Tsc22d2"/>
</dbReference>
<dbReference type="VEuPathDB" id="HostDB:ENSMUSG00000027806"/>
<dbReference type="eggNOG" id="KOG4797">
    <property type="taxonomic scope" value="Eukaryota"/>
</dbReference>
<dbReference type="GeneTree" id="ENSGT00940000160465"/>
<dbReference type="HOGENOM" id="CLU_020315_0_0_1"/>
<dbReference type="InParanoid" id="E9Q7M2"/>
<dbReference type="OMA" id="TFYQVFH"/>
<dbReference type="OrthoDB" id="8961796at2759"/>
<dbReference type="TreeFam" id="TF318837"/>
<dbReference type="BioGRID-ORCS" id="72033">
    <property type="hits" value="7 hits in 78 CRISPR screens"/>
</dbReference>
<dbReference type="ChiTaRS" id="Tsc22d2">
    <property type="organism name" value="mouse"/>
</dbReference>
<dbReference type="PRO" id="PR:E9Q7M2"/>
<dbReference type="Proteomes" id="UP000000589">
    <property type="component" value="Chromosome 3"/>
</dbReference>
<dbReference type="RNAct" id="E9Q7M2">
    <property type="molecule type" value="protein"/>
</dbReference>
<dbReference type="Bgee" id="ENSMUSG00000027806">
    <property type="expression patterns" value="Expressed in cleaving embryo and 229 other cell types or tissues"/>
</dbReference>
<dbReference type="ExpressionAtlas" id="E9Q7M2">
    <property type="expression patterns" value="baseline and differential"/>
</dbReference>
<dbReference type="GO" id="GO:0045786">
    <property type="term" value="P:negative regulation of cell cycle"/>
    <property type="evidence" value="ECO:0000250"/>
    <property type="project" value="UniProtKB"/>
</dbReference>
<dbReference type="GO" id="GO:0006357">
    <property type="term" value="P:regulation of transcription by RNA polymerase II"/>
    <property type="evidence" value="ECO:0007669"/>
    <property type="project" value="InterPro"/>
</dbReference>
<dbReference type="GO" id="GO:0006970">
    <property type="term" value="P:response to osmotic stress"/>
    <property type="evidence" value="ECO:0000314"/>
    <property type="project" value="MGI"/>
</dbReference>
<dbReference type="CDD" id="cd21939">
    <property type="entry name" value="ZIP_TSC22D2"/>
    <property type="match status" value="1"/>
</dbReference>
<dbReference type="FunFam" id="1.20.5.490:FF:000002">
    <property type="entry name" value="TSC22 domain family, member 1"/>
    <property type="match status" value="1"/>
</dbReference>
<dbReference type="Gene3D" id="1.20.5.490">
    <property type="entry name" value="Single helix bin"/>
    <property type="match status" value="1"/>
</dbReference>
<dbReference type="InterPro" id="IPR000580">
    <property type="entry name" value="TSC22/Bun"/>
</dbReference>
<dbReference type="InterPro" id="IPR047862">
    <property type="entry name" value="TSC22/BUN_CS"/>
</dbReference>
<dbReference type="InterPro" id="IPR053049">
    <property type="entry name" value="TSC22_domain_protein_2"/>
</dbReference>
<dbReference type="PANTHER" id="PTHR46894">
    <property type="entry name" value="TSC22 DOMAIN FAMILY PROTEIN 2"/>
    <property type="match status" value="1"/>
</dbReference>
<dbReference type="PANTHER" id="PTHR46894:SF1">
    <property type="entry name" value="TSC22 DOMAIN FAMILY PROTEIN 2"/>
    <property type="match status" value="1"/>
</dbReference>
<dbReference type="Pfam" id="PF01166">
    <property type="entry name" value="TSC22"/>
    <property type="match status" value="1"/>
</dbReference>
<dbReference type="SUPFAM" id="SSF58026">
    <property type="entry name" value="Delta-sleep-inducing peptide immunoreactive peptide"/>
    <property type="match status" value="1"/>
</dbReference>
<dbReference type="PROSITE" id="PS01289">
    <property type="entry name" value="TSC22"/>
    <property type="match status" value="1"/>
</dbReference>
<evidence type="ECO:0000250" key="1">
    <source>
        <dbReference type="UniProtKB" id="O75157"/>
    </source>
</evidence>
<evidence type="ECO:0000255" key="2"/>
<evidence type="ECO:0000256" key="3">
    <source>
        <dbReference type="SAM" id="MobiDB-lite"/>
    </source>
</evidence>
<evidence type="ECO:0000269" key="4">
    <source>
    </source>
</evidence>
<evidence type="ECO:0000303" key="5">
    <source>
    </source>
</evidence>
<evidence type="ECO:0000305" key="6"/>
<evidence type="ECO:0000305" key="7">
    <source>
    </source>
</evidence>
<evidence type="ECO:0000312" key="8">
    <source>
        <dbReference type="EMBL" id="AAH58221.1"/>
    </source>
</evidence>
<evidence type="ECO:0000312" key="9">
    <source>
        <dbReference type="EMBL" id="ABS52638.1"/>
    </source>
</evidence>
<evidence type="ECO:0000312" key="10">
    <source>
        <dbReference type="EMBL" id="BAE21164.1"/>
    </source>
</evidence>
<evidence type="ECO:0000312" key="11">
    <source>
        <dbReference type="MGI" id="MGI:1919283"/>
    </source>
</evidence>
<evidence type="ECO:0000312" key="12">
    <source>
        <dbReference type="Proteomes" id="UP000000589"/>
    </source>
</evidence>
<evidence type="ECO:0007744" key="13">
    <source>
    </source>
</evidence>
<sequence>MSKMPAKKKSCFQITSVTTAQVATSITEDTESLDDPDESRTEDVSSEIFDVSRATDYGPEEVCERSSSEETLNNVGDAETPGTVSPNLILDGQLAAASAAPANGGGGGVSARSVAGALAQTLAAAAASVSTPGPSSATPSQPPATCSSRFRVIKLDHGSGEPYRRGRWTCMEYYERDSDSSVLTRSGDCIRHSNTLEQTAERDSGLGATGGSVVVVVASMQGAHGLDSGTDSSLTAVSQLPPSEKMSQPTLAQPQSFSVGQPQPPPPVGGAVAPSSASLPPFPGAATGPQPMTAAVQPTQLQGAVAGGALPGPVGQGLPPPPNVNLAQPVALAAQPGPAGGSSLSQQFAYPQPQIPPGHLLPMQPSGQSEYLPPHVALQPPSPAQPLSTSASATSASAASFPLGSGQSVSSLGAQMMGASAQPSEAVAPGPVPVGQAAPCQPAGVAPAALGGVVQPGSGLTGVGQPQPVQPPQQMGGSGQLPAVPGGPHTVVPGVPNVPAAVPVPSVPSVPTTSVTMPNVPAPLGQSQQLSSHTPVSRSSSVIQQVGSPLAQGTHSAPTSLPQSDLSQFQTQTQPLVGQVDDTRRKSEPLPQAPLSLIAESKPVVKPPVADALTNPLQLTPMNSLATSVFSIAIPVDGDEDRNPSTAFYQAFHLNTCQESKSLWDSASGGGVVAIDNKIEQAMDLVKSHLMYAVREEVEVLKEQIKELVERNSLLERENALLKSLSNNDQLSQLPAQQANPGSTSQQQAMIAQPPQPTQPPQQPNVSSA</sequence>